<dbReference type="EMBL" id="DP000009">
    <property type="protein sequence ID" value="ABF94607.1"/>
    <property type="status" value="ALT_SEQ"/>
    <property type="molecule type" value="Genomic_DNA"/>
</dbReference>
<dbReference type="EMBL" id="AP008209">
    <property type="protein sequence ID" value="BAF11267.1"/>
    <property type="status" value="ALT_SEQ"/>
    <property type="molecule type" value="Genomic_DNA"/>
</dbReference>
<dbReference type="EMBL" id="AP014959">
    <property type="protein sequence ID" value="BAS82926.1"/>
    <property type="molecule type" value="Genomic_DNA"/>
</dbReference>
<dbReference type="EMBL" id="CM000140">
    <property type="protein sequence ID" value="EEE58571.1"/>
    <property type="molecule type" value="Genomic_DNA"/>
</dbReference>
<dbReference type="EMBL" id="AK069951">
    <property type="status" value="NOT_ANNOTATED_CDS"/>
    <property type="molecule type" value="mRNA"/>
</dbReference>
<dbReference type="RefSeq" id="XP_015628623.1">
    <property type="nucleotide sequence ID" value="XM_015773137.1"/>
</dbReference>
<dbReference type="SMR" id="B9F655"/>
<dbReference type="FunCoup" id="B9F655">
    <property type="interactions" value="1338"/>
</dbReference>
<dbReference type="STRING" id="39947.B9F655"/>
<dbReference type="PaxDb" id="39947-B9F655"/>
<dbReference type="KEGG" id="dosa:Os03g0212200"/>
<dbReference type="eggNOG" id="KOG0619">
    <property type="taxonomic scope" value="Eukaryota"/>
</dbReference>
<dbReference type="HOGENOM" id="CLU_1819077_0_0_1"/>
<dbReference type="InParanoid" id="B9F655"/>
<dbReference type="OMA" id="CTIVDIP"/>
<dbReference type="OrthoDB" id="676979at2759"/>
<dbReference type="Proteomes" id="UP000000763">
    <property type="component" value="Chromosome 3"/>
</dbReference>
<dbReference type="Proteomes" id="UP000007752">
    <property type="component" value="Chromosome 3"/>
</dbReference>
<dbReference type="Proteomes" id="UP000059680">
    <property type="component" value="Chromosome 3"/>
</dbReference>
<dbReference type="GO" id="GO:0035556">
    <property type="term" value="P:intracellular signal transduction"/>
    <property type="evidence" value="ECO:0000318"/>
    <property type="project" value="GO_Central"/>
</dbReference>
<dbReference type="Gene3D" id="3.80.10.10">
    <property type="entry name" value="Ribonuclease Inhibitor"/>
    <property type="match status" value="1"/>
</dbReference>
<dbReference type="InterPro" id="IPR001611">
    <property type="entry name" value="Leu-rich_rpt"/>
</dbReference>
<dbReference type="InterPro" id="IPR003591">
    <property type="entry name" value="Leu-rich_rpt_typical-subtyp"/>
</dbReference>
<dbReference type="InterPro" id="IPR032675">
    <property type="entry name" value="LRR_dom_sf"/>
</dbReference>
<dbReference type="InterPro" id="IPR050216">
    <property type="entry name" value="LRR_domain-containing"/>
</dbReference>
<dbReference type="InterPro" id="IPR055414">
    <property type="entry name" value="LRR_R13L4/SHOC2-like"/>
</dbReference>
<dbReference type="PANTHER" id="PTHR48051">
    <property type="match status" value="1"/>
</dbReference>
<dbReference type="PANTHER" id="PTHR48051:SF1">
    <property type="entry name" value="RAS SUPPRESSOR PROTEIN 1"/>
    <property type="match status" value="1"/>
</dbReference>
<dbReference type="Pfam" id="PF00560">
    <property type="entry name" value="LRR_1"/>
    <property type="match status" value="1"/>
</dbReference>
<dbReference type="Pfam" id="PF23598">
    <property type="entry name" value="LRR_14"/>
    <property type="match status" value="1"/>
</dbReference>
<dbReference type="SMART" id="SM00364">
    <property type="entry name" value="LRR_BAC"/>
    <property type="match status" value="6"/>
</dbReference>
<dbReference type="SMART" id="SM00369">
    <property type="entry name" value="LRR_TYP"/>
    <property type="match status" value="5"/>
</dbReference>
<dbReference type="SUPFAM" id="SSF52058">
    <property type="entry name" value="L domain-like"/>
    <property type="match status" value="1"/>
</dbReference>
<dbReference type="PROSITE" id="PS51450">
    <property type="entry name" value="LRR"/>
    <property type="match status" value="6"/>
</dbReference>
<comment type="function">
    <text evidence="1">Leucine-rich repeat protein that likely mediates protein interactions, possibly in the context of signal transduction.</text>
</comment>
<comment type="alternative products">
    <event type="alternative splicing"/>
    <isoform>
        <id>B9F655-1</id>
        <name>1</name>
        <sequence type="displayed"/>
    </isoform>
    <isoform>
        <id>B9F655-2</id>
        <name>2</name>
        <sequence type="described" ref="VSP_053209 VSP_053210"/>
    </isoform>
</comment>
<comment type="tissue specificity">
    <text evidence="2">Widely expressed and preferentially in leaf sheathes.</text>
</comment>
<comment type="disruption phenotype">
    <text evidence="2">No visible phenotype.</text>
</comment>
<comment type="similarity">
    <text evidence="4">Belongs to the SHOC2 family.</text>
</comment>
<comment type="sequence caution" evidence="4">
    <conflict type="erroneous gene model prediction">
        <sequence resource="EMBL-CDS" id="ABF94607"/>
    </conflict>
</comment>
<comment type="sequence caution" evidence="4">
    <conflict type="erroneous gene model prediction">
        <sequence resource="EMBL-CDS" id="BAF11267"/>
    </conflict>
</comment>
<name>PIRL7_ORYSJ</name>
<sequence>MGCCSSRSADSPASRVTRWRSTGIVALRDARLKVVPNEVLQVGNSLRILDLTNNKIAEIPQEVGTLVNMQRLVLAGNLVESIPANIGYLRNLKILTLDRNKISVLPEELGSLSNLQQLSISQNSLSRLPKSVGDLRNMLLLNVSDNKLIALPESIGGCSSLEELQANGNSIEDVPSSICNLVCLKSLSLNGNKIRQLPQNLLKDCKALQNISLHDNPISMDQFQQMDGFTEFEARRRKKFDKQIDSNVMMSSTALDEGIDLN</sequence>
<accession>B9F655</accession>
<accession>Q0DU21</accession>
<accession>Q10Q27</accession>
<keyword id="KW-0025">Alternative splicing</keyword>
<keyword id="KW-0433">Leucine-rich repeat</keyword>
<keyword id="KW-1185">Reference proteome</keyword>
<keyword id="KW-0677">Repeat</keyword>
<reference key="1">
    <citation type="journal article" date="2005" name="Genome Res.">
        <title>Sequence, annotation, and analysis of synteny between rice chromosome 3 and diverged grass species.</title>
        <authorList>
            <consortium name="The rice chromosome 3 sequencing consortium"/>
            <person name="Buell C.R."/>
            <person name="Yuan Q."/>
            <person name="Ouyang S."/>
            <person name="Liu J."/>
            <person name="Zhu W."/>
            <person name="Wang A."/>
            <person name="Maiti R."/>
            <person name="Haas B."/>
            <person name="Wortman J."/>
            <person name="Pertea M."/>
            <person name="Jones K.M."/>
            <person name="Kim M."/>
            <person name="Overton L."/>
            <person name="Tsitrin T."/>
            <person name="Fadrosh D."/>
            <person name="Bera J."/>
            <person name="Weaver B."/>
            <person name="Jin S."/>
            <person name="Johri S."/>
            <person name="Reardon M."/>
            <person name="Webb K."/>
            <person name="Hill J."/>
            <person name="Moffat K."/>
            <person name="Tallon L."/>
            <person name="Van Aken S."/>
            <person name="Lewis M."/>
            <person name="Utterback T."/>
            <person name="Feldblyum T."/>
            <person name="Zismann V."/>
            <person name="Iobst S."/>
            <person name="Hsiao J."/>
            <person name="de Vazeille A.R."/>
            <person name="Salzberg S.L."/>
            <person name="White O."/>
            <person name="Fraser C.M."/>
            <person name="Yu Y."/>
            <person name="Kim H."/>
            <person name="Rambo T."/>
            <person name="Currie J."/>
            <person name="Collura K."/>
            <person name="Kernodle-Thompson S."/>
            <person name="Wei F."/>
            <person name="Kudrna K."/>
            <person name="Ammiraju J.S.S."/>
            <person name="Luo M."/>
            <person name="Goicoechea J.L."/>
            <person name="Wing R.A."/>
            <person name="Henry D."/>
            <person name="Oates R."/>
            <person name="Palmer M."/>
            <person name="Pries G."/>
            <person name="Saski C."/>
            <person name="Simmons J."/>
            <person name="Soderlund C."/>
            <person name="Nelson W."/>
            <person name="de la Bastide M."/>
            <person name="Spiegel L."/>
            <person name="Nascimento L."/>
            <person name="Huang E."/>
            <person name="Preston R."/>
            <person name="Zutavern T."/>
            <person name="Palmer L."/>
            <person name="O'Shaughnessy A."/>
            <person name="Dike S."/>
            <person name="McCombie W.R."/>
            <person name="Minx P."/>
            <person name="Cordum H."/>
            <person name="Wilson R."/>
            <person name="Jin W."/>
            <person name="Lee H.R."/>
            <person name="Jiang J."/>
            <person name="Jackson S."/>
        </authorList>
    </citation>
    <scope>NUCLEOTIDE SEQUENCE [LARGE SCALE GENOMIC DNA]</scope>
    <source>
        <strain>cv. Nipponbare</strain>
    </source>
</reference>
<reference key="2">
    <citation type="journal article" date="2005" name="Nature">
        <title>The map-based sequence of the rice genome.</title>
        <authorList>
            <consortium name="International rice genome sequencing project (IRGSP)"/>
        </authorList>
    </citation>
    <scope>NUCLEOTIDE SEQUENCE [LARGE SCALE GENOMIC DNA]</scope>
    <source>
        <strain>cv. Nipponbare</strain>
    </source>
</reference>
<reference key="3">
    <citation type="journal article" date="2008" name="Nucleic Acids Res.">
        <title>The rice annotation project database (RAP-DB): 2008 update.</title>
        <authorList>
            <consortium name="The rice annotation project (RAP)"/>
        </authorList>
    </citation>
    <scope>GENOME REANNOTATION</scope>
    <source>
        <strain>cv. Nipponbare</strain>
    </source>
</reference>
<reference key="4">
    <citation type="journal article" date="2013" name="Rice">
        <title>Improvement of the Oryza sativa Nipponbare reference genome using next generation sequence and optical map data.</title>
        <authorList>
            <person name="Kawahara Y."/>
            <person name="de la Bastide M."/>
            <person name="Hamilton J.P."/>
            <person name="Kanamori H."/>
            <person name="McCombie W.R."/>
            <person name="Ouyang S."/>
            <person name="Schwartz D.C."/>
            <person name="Tanaka T."/>
            <person name="Wu J."/>
            <person name="Zhou S."/>
            <person name="Childs K.L."/>
            <person name="Davidson R.M."/>
            <person name="Lin H."/>
            <person name="Quesada-Ocampo L."/>
            <person name="Vaillancourt B."/>
            <person name="Sakai H."/>
            <person name="Lee S.S."/>
            <person name="Kim J."/>
            <person name="Numa H."/>
            <person name="Itoh T."/>
            <person name="Buell C.R."/>
            <person name="Matsumoto T."/>
        </authorList>
    </citation>
    <scope>GENOME REANNOTATION</scope>
    <source>
        <strain>cv. Nipponbare</strain>
    </source>
</reference>
<reference key="5">
    <citation type="journal article" date="2005" name="PLoS Biol.">
        <title>The genomes of Oryza sativa: a history of duplications.</title>
        <authorList>
            <person name="Yu J."/>
            <person name="Wang J."/>
            <person name="Lin W."/>
            <person name="Li S."/>
            <person name="Li H."/>
            <person name="Zhou J."/>
            <person name="Ni P."/>
            <person name="Dong W."/>
            <person name="Hu S."/>
            <person name="Zeng C."/>
            <person name="Zhang J."/>
            <person name="Zhang Y."/>
            <person name="Li R."/>
            <person name="Xu Z."/>
            <person name="Li S."/>
            <person name="Li X."/>
            <person name="Zheng H."/>
            <person name="Cong L."/>
            <person name="Lin L."/>
            <person name="Yin J."/>
            <person name="Geng J."/>
            <person name="Li G."/>
            <person name="Shi J."/>
            <person name="Liu J."/>
            <person name="Lv H."/>
            <person name="Li J."/>
            <person name="Wang J."/>
            <person name="Deng Y."/>
            <person name="Ran L."/>
            <person name="Shi X."/>
            <person name="Wang X."/>
            <person name="Wu Q."/>
            <person name="Li C."/>
            <person name="Ren X."/>
            <person name="Wang J."/>
            <person name="Wang X."/>
            <person name="Li D."/>
            <person name="Liu D."/>
            <person name="Zhang X."/>
            <person name="Ji Z."/>
            <person name="Zhao W."/>
            <person name="Sun Y."/>
            <person name="Zhang Z."/>
            <person name="Bao J."/>
            <person name="Han Y."/>
            <person name="Dong L."/>
            <person name="Ji J."/>
            <person name="Chen P."/>
            <person name="Wu S."/>
            <person name="Liu J."/>
            <person name="Xiao Y."/>
            <person name="Bu D."/>
            <person name="Tan J."/>
            <person name="Yang L."/>
            <person name="Ye C."/>
            <person name="Zhang J."/>
            <person name="Xu J."/>
            <person name="Zhou Y."/>
            <person name="Yu Y."/>
            <person name="Zhang B."/>
            <person name="Zhuang S."/>
            <person name="Wei H."/>
            <person name="Liu B."/>
            <person name="Lei M."/>
            <person name="Yu H."/>
            <person name="Li Y."/>
            <person name="Xu H."/>
            <person name="Wei S."/>
            <person name="He X."/>
            <person name="Fang L."/>
            <person name="Zhang Z."/>
            <person name="Zhang Y."/>
            <person name="Huang X."/>
            <person name="Su Z."/>
            <person name="Tong W."/>
            <person name="Li J."/>
            <person name="Tong Z."/>
            <person name="Li S."/>
            <person name="Ye J."/>
            <person name="Wang L."/>
            <person name="Fang L."/>
            <person name="Lei T."/>
            <person name="Chen C.-S."/>
            <person name="Chen H.-C."/>
            <person name="Xu Z."/>
            <person name="Li H."/>
            <person name="Huang H."/>
            <person name="Zhang F."/>
            <person name="Xu H."/>
            <person name="Li N."/>
            <person name="Zhao C."/>
            <person name="Li S."/>
            <person name="Dong L."/>
            <person name="Huang Y."/>
            <person name="Li L."/>
            <person name="Xi Y."/>
            <person name="Qi Q."/>
            <person name="Li W."/>
            <person name="Zhang B."/>
            <person name="Hu W."/>
            <person name="Zhang Y."/>
            <person name="Tian X."/>
            <person name="Jiao Y."/>
            <person name="Liang X."/>
            <person name="Jin J."/>
            <person name="Gao L."/>
            <person name="Zheng W."/>
            <person name="Hao B."/>
            <person name="Liu S.-M."/>
            <person name="Wang W."/>
            <person name="Yuan L."/>
            <person name="Cao M."/>
            <person name="McDermott J."/>
            <person name="Samudrala R."/>
            <person name="Wang J."/>
            <person name="Wong G.K.-S."/>
            <person name="Yang H."/>
        </authorList>
    </citation>
    <scope>NUCLEOTIDE SEQUENCE [LARGE SCALE GENOMIC DNA]</scope>
    <source>
        <strain>cv. Nipponbare</strain>
    </source>
</reference>
<reference key="6">
    <citation type="journal article" date="2003" name="Science">
        <title>Collection, mapping, and annotation of over 28,000 cDNA clones from japonica rice.</title>
        <authorList>
            <consortium name="The rice full-length cDNA consortium"/>
        </authorList>
    </citation>
    <scope>NUCLEOTIDE SEQUENCE [LARGE SCALE MRNA] (ISOFORM 2)</scope>
    <source>
        <strain>cv. Nipponbare</strain>
    </source>
</reference>
<reference key="7">
    <citation type="journal article" date="2010" name="Plant Mol. Biol.">
        <title>Molecular characterization, expression pattern, and functional analysis of the OsIRL gene family encoding intracellular Ras-group-related LRR proteins in rice.</title>
        <authorList>
            <person name="You C."/>
            <person name="Dai X."/>
            <person name="Li X."/>
            <person name="Wang L."/>
            <person name="Chen G."/>
            <person name="Xiao J."/>
            <person name="Wu C."/>
        </authorList>
    </citation>
    <scope>GENE FAMILY</scope>
    <scope>TISSUE SPECIFICITY</scope>
    <scope>DISRUPTION PHENOTYPE</scope>
</reference>
<organism>
    <name type="scientific">Oryza sativa subsp. japonica</name>
    <name type="common">Rice</name>
    <dbReference type="NCBI Taxonomy" id="39947"/>
    <lineage>
        <taxon>Eukaryota</taxon>
        <taxon>Viridiplantae</taxon>
        <taxon>Streptophyta</taxon>
        <taxon>Embryophyta</taxon>
        <taxon>Tracheophyta</taxon>
        <taxon>Spermatophyta</taxon>
        <taxon>Magnoliopsida</taxon>
        <taxon>Liliopsida</taxon>
        <taxon>Poales</taxon>
        <taxon>Poaceae</taxon>
        <taxon>BOP clade</taxon>
        <taxon>Oryzoideae</taxon>
        <taxon>Oryzeae</taxon>
        <taxon>Oryzinae</taxon>
        <taxon>Oryza</taxon>
        <taxon>Oryza sativa</taxon>
    </lineage>
</organism>
<proteinExistence type="evidence at transcript level"/>
<evidence type="ECO:0000250" key="1"/>
<evidence type="ECO:0000269" key="2">
    <source>
    </source>
</evidence>
<evidence type="ECO:0000303" key="3">
    <source>
    </source>
</evidence>
<evidence type="ECO:0000305" key="4"/>
<protein>
    <recommendedName>
        <fullName>Plant intracellular Ras-group-related LRR protein 7</fullName>
    </recommendedName>
    <alternativeName>
        <fullName>Intracellular Ras-group-related LRR protein 7</fullName>
        <shortName>OsIRL7</shortName>
    </alternativeName>
</protein>
<gene>
    <name type="primary">IRL7</name>
    <name type="ordered locus">Os03g0212200</name>
    <name type="ordered locus">LOC_Os03g11360</name>
    <name type="ORF">OsJ_09890</name>
</gene>
<feature type="chain" id="PRO_0000423616" description="Plant intracellular Ras-group-related LRR protein 7">
    <location>
        <begin position="1"/>
        <end position="262"/>
    </location>
</feature>
<feature type="repeat" description="LRR 1">
    <location>
        <begin position="19"/>
        <end position="42"/>
    </location>
</feature>
<feature type="repeat" description="LRR 2">
    <location>
        <begin position="43"/>
        <end position="66"/>
    </location>
</feature>
<feature type="repeat" description="LRR 3">
    <location>
        <begin position="68"/>
        <end position="89"/>
    </location>
</feature>
<feature type="repeat" description="LRR 4">
    <location>
        <begin position="90"/>
        <end position="112"/>
    </location>
</feature>
<feature type="repeat" description="LRR 5">
    <location>
        <begin position="113"/>
        <end position="135"/>
    </location>
</feature>
<feature type="repeat" description="LRR 6">
    <location>
        <begin position="137"/>
        <end position="158"/>
    </location>
</feature>
<feature type="repeat" description="LRR 7">
    <location>
        <begin position="159"/>
        <end position="181"/>
    </location>
</feature>
<feature type="repeat" description="LRR 8">
    <location>
        <begin position="182"/>
        <end position="204"/>
    </location>
</feature>
<feature type="repeat" description="LRR 9">
    <location>
        <begin position="206"/>
        <end position="231"/>
    </location>
</feature>
<feature type="splice variant" id="VSP_053209" description="In isoform 2." evidence="3">
    <original>MLLLN</original>
    <variation>NQINS</variation>
    <location>
        <begin position="138"/>
        <end position="142"/>
    </location>
</feature>
<feature type="splice variant" id="VSP_053210" description="In isoform 2." evidence="3">
    <location>
        <begin position="143"/>
        <end position="262"/>
    </location>
</feature>